<gene>
    <name evidence="1" type="primary">fau-1</name>
    <name type="ordered locus">M164_1122</name>
</gene>
<comment type="function">
    <text evidence="1">Probable RNase involved in rRNA stability through maturation and/or degradation of precursor rRNAs. Binds to RNA in loop regions with AU-rich sequences.</text>
</comment>
<comment type="similarity">
    <text evidence="1">Belongs to the FAU-1 family.</text>
</comment>
<name>FAU1_SACI6</name>
<proteinExistence type="inferred from homology"/>
<keyword id="KW-0255">Endonuclease</keyword>
<keyword id="KW-0378">Hydrolase</keyword>
<keyword id="KW-0540">Nuclease</keyword>
<keyword id="KW-0694">RNA-binding</keyword>
<keyword id="KW-0698">rRNA processing</keyword>
<feature type="chain" id="PRO_1000216187" description="Probable ribonuclease FAU-1">
    <location>
        <begin position="1"/>
        <end position="424"/>
    </location>
</feature>
<organism>
    <name type="scientific">Saccharolobus islandicus (strain M.16.4 / Kamchatka #3)</name>
    <name type="common">Sulfolobus islandicus</name>
    <dbReference type="NCBI Taxonomy" id="426118"/>
    <lineage>
        <taxon>Archaea</taxon>
        <taxon>Thermoproteota</taxon>
        <taxon>Thermoprotei</taxon>
        <taxon>Sulfolobales</taxon>
        <taxon>Sulfolobaceae</taxon>
        <taxon>Saccharolobus</taxon>
    </lineage>
</organism>
<sequence>MKGRVRIRGIYATALTSIFSSLSYEIVQQSVEIAERFMREVNNLPADITIKDFEYDRGKIIVMGNGTIEEDLHDVFKYSFHWKSPIKLYSVIEADESCTYGNFKVEPCLEEGIVIKPPYDGKIVLSETKAVSKYAMVWRGKGVTTFSEHINNEEERLRLLTLSSPLNRKGYNVKWRSNAKYATLNELKEDLERLVLRYENREFRDQGEDFYLITLSLPDKLHLDEVRKSIVNTVKYHHMLKLSYNREVDSLEKDKEGSPVKLLEALISDFMKIEHIKADGKAIYLRGGKVIEKEVNNDGYRITLRREINGNGVLDGIGKRIENGDYDIVEYNSDKWYQIHRYYSGIDNSLKGIYINISTPPELLKGKIRYLDLEIDIAIRDSEIIVLDEDELNKKSIYMHSSLVNKAKEVANYLIDCIQQNKLI</sequence>
<protein>
    <recommendedName>
        <fullName evidence="1">Probable ribonuclease FAU-1</fullName>
        <ecNumber evidence="1">3.1.26.-</ecNumber>
    </recommendedName>
    <alternativeName>
        <fullName evidence="1">RNA-binding protein FAU-1</fullName>
    </alternativeName>
</protein>
<accession>C4KGL2</accession>
<dbReference type="EC" id="3.1.26.-" evidence="1"/>
<dbReference type="EMBL" id="CP001402">
    <property type="protein sequence ID" value="ACR41726.1"/>
    <property type="molecule type" value="Genomic_DNA"/>
</dbReference>
<dbReference type="RefSeq" id="WP_012711156.1">
    <property type="nucleotide sequence ID" value="NC_012726.1"/>
</dbReference>
<dbReference type="SMR" id="C4KGL2"/>
<dbReference type="KEGG" id="sid:M164_1122"/>
<dbReference type="HOGENOM" id="CLU_044303_0_0_2"/>
<dbReference type="Proteomes" id="UP000001479">
    <property type="component" value="Chromosome"/>
</dbReference>
<dbReference type="GO" id="GO:0035925">
    <property type="term" value="F:mRNA 3'-UTR AU-rich region binding"/>
    <property type="evidence" value="ECO:0007669"/>
    <property type="project" value="UniProtKB-UniRule"/>
</dbReference>
<dbReference type="GO" id="GO:0016891">
    <property type="term" value="F:RNA endonuclease activity, producing 5'-phosphomonoesters"/>
    <property type="evidence" value="ECO:0007669"/>
    <property type="project" value="UniProtKB-UniRule"/>
</dbReference>
<dbReference type="GO" id="GO:0006364">
    <property type="term" value="P:rRNA processing"/>
    <property type="evidence" value="ECO:0007669"/>
    <property type="project" value="UniProtKB-UniRule"/>
</dbReference>
<dbReference type="Gene3D" id="2.40.380.10">
    <property type="entry name" value="FomD-like"/>
    <property type="match status" value="1"/>
</dbReference>
<dbReference type="HAMAP" id="MF_01910">
    <property type="entry name" value="RNA_binding_AU_1"/>
    <property type="match status" value="1"/>
</dbReference>
<dbReference type="InterPro" id="IPR007295">
    <property type="entry name" value="DUF402"/>
</dbReference>
<dbReference type="InterPro" id="IPR035930">
    <property type="entry name" value="FomD-like_sf"/>
</dbReference>
<dbReference type="InterPro" id="IPR050212">
    <property type="entry name" value="Ntdp-like"/>
</dbReference>
<dbReference type="InterPro" id="IPR016730">
    <property type="entry name" value="RNA-bd_FAU-1"/>
</dbReference>
<dbReference type="PANTHER" id="PTHR39159">
    <property type="match status" value="1"/>
</dbReference>
<dbReference type="PANTHER" id="PTHR39159:SF1">
    <property type="entry name" value="UPF0374 PROTEIN YGAC"/>
    <property type="match status" value="1"/>
</dbReference>
<dbReference type="Pfam" id="PF04167">
    <property type="entry name" value="DUF402"/>
    <property type="match status" value="1"/>
</dbReference>
<dbReference type="PIRSF" id="PIRSF018644">
    <property type="entry name" value="RNA-binding_FAU-1"/>
    <property type="match status" value="1"/>
</dbReference>
<dbReference type="SUPFAM" id="SSF159234">
    <property type="entry name" value="FomD-like"/>
    <property type="match status" value="1"/>
</dbReference>
<reference key="1">
    <citation type="journal article" date="2009" name="Proc. Natl. Acad. Sci. U.S.A.">
        <title>Biogeography of the Sulfolobus islandicus pan-genome.</title>
        <authorList>
            <person name="Reno M.L."/>
            <person name="Held N.L."/>
            <person name="Fields C.J."/>
            <person name="Burke P.V."/>
            <person name="Whitaker R.J."/>
        </authorList>
    </citation>
    <scope>NUCLEOTIDE SEQUENCE [LARGE SCALE GENOMIC DNA]</scope>
    <source>
        <strain>M.16.4 / Kamchatka #3</strain>
    </source>
</reference>
<evidence type="ECO:0000255" key="1">
    <source>
        <dbReference type="HAMAP-Rule" id="MF_01910"/>
    </source>
</evidence>